<protein>
    <recommendedName>
        <fullName>Uncharacterized protein 072L</fullName>
    </recommendedName>
</protein>
<keyword id="KW-1185">Reference proteome</keyword>
<name>072L_IIV3</name>
<reference key="1">
    <citation type="journal article" date="2006" name="J. Virol.">
        <title>Genome of invertebrate iridescent virus type 3 (mosquito iridescent virus).</title>
        <authorList>
            <person name="Delhon G."/>
            <person name="Tulman E.R."/>
            <person name="Afonso C.L."/>
            <person name="Lu Z."/>
            <person name="Becnel J.J."/>
            <person name="Moser B.A."/>
            <person name="Kutish G.F."/>
            <person name="Rock D.L."/>
        </authorList>
    </citation>
    <scope>NUCLEOTIDE SEQUENCE [LARGE SCALE GENOMIC DNA]</scope>
</reference>
<sequence length="156" mass="17799">MEDEDDIFENQPEFLAERNVWARVGGPDIGLGLGGMINLKKSGYTIGEKFKLIAAATIKMLNDGMEEDLLSDAALTRMLSLVESDKMPDFQTKNPSAFAMGYVVAIHSNYNTLEIDREKLEVIFKLNNELESSFFSRIEERDILRYVRFCLIHKLK</sequence>
<gene>
    <name type="ORF">IIV3-072L</name>
</gene>
<organism>
    <name type="scientific">Invertebrate iridescent virus 3</name>
    <name type="common">IIV-3</name>
    <name type="synonym">Mosquito iridescent virus</name>
    <dbReference type="NCBI Taxonomy" id="345201"/>
    <lineage>
        <taxon>Viruses</taxon>
        <taxon>Varidnaviria</taxon>
        <taxon>Bamfordvirae</taxon>
        <taxon>Nucleocytoviricota</taxon>
        <taxon>Megaviricetes</taxon>
        <taxon>Pimascovirales</taxon>
        <taxon>Iridoviridae</taxon>
        <taxon>Betairidovirinae</taxon>
        <taxon>Chloriridovirus</taxon>
    </lineage>
</organism>
<proteinExistence type="predicted"/>
<organismHost>
    <name type="scientific">Aedes vexans</name>
    <name type="common">Inland floodwater mosquito</name>
    <name type="synonym">Culex vexans</name>
    <dbReference type="NCBI Taxonomy" id="7163"/>
</organismHost>
<organismHost>
    <name type="scientific">Culex territans</name>
    <dbReference type="NCBI Taxonomy" id="42431"/>
</organismHost>
<organismHost>
    <name type="scientific">Culiseta annulata</name>
    <dbReference type="NCBI Taxonomy" id="332058"/>
</organismHost>
<organismHost>
    <name type="scientific">Ochlerotatus sollicitans</name>
    <name type="common">eastern saltmarsh mosquito</name>
    <dbReference type="NCBI Taxonomy" id="310513"/>
</organismHost>
<organismHost>
    <name type="scientific">Ochlerotatus taeniorhynchus</name>
    <name type="common">Black salt marsh mosquito</name>
    <name type="synonym">Aedes taeniorhynchus</name>
    <dbReference type="NCBI Taxonomy" id="329105"/>
</organismHost>
<organismHost>
    <name type="scientific">Psorophora ferox</name>
    <dbReference type="NCBI Taxonomy" id="7183"/>
</organismHost>
<feature type="chain" id="PRO_0000377802" description="Uncharacterized protein 072L">
    <location>
        <begin position="1"/>
        <end position="156"/>
    </location>
</feature>
<accession>Q196Y8</accession>
<dbReference type="EMBL" id="DQ643392">
    <property type="protein sequence ID" value="ABF82102.1"/>
    <property type="molecule type" value="Genomic_DNA"/>
</dbReference>
<dbReference type="RefSeq" id="YP_654644.1">
    <property type="nucleotide sequence ID" value="NC_008187.1"/>
</dbReference>
<dbReference type="KEGG" id="vg:4156283"/>
<dbReference type="OrthoDB" id="20814at10239"/>
<dbReference type="Proteomes" id="UP000001358">
    <property type="component" value="Genome"/>
</dbReference>